<comment type="function">
    <text evidence="1">Essential for recycling GMP and indirectly, cGMP.</text>
</comment>
<comment type="catalytic activity">
    <reaction evidence="1">
        <text>GMP + ATP = GDP + ADP</text>
        <dbReference type="Rhea" id="RHEA:20780"/>
        <dbReference type="ChEBI" id="CHEBI:30616"/>
        <dbReference type="ChEBI" id="CHEBI:58115"/>
        <dbReference type="ChEBI" id="CHEBI:58189"/>
        <dbReference type="ChEBI" id="CHEBI:456216"/>
        <dbReference type="EC" id="2.7.4.8"/>
    </reaction>
</comment>
<comment type="subcellular location">
    <subcellularLocation>
        <location evidence="1">Cytoplasm</location>
    </subcellularLocation>
</comment>
<comment type="similarity">
    <text evidence="1">Belongs to the guanylate kinase family.</text>
</comment>
<evidence type="ECO:0000255" key="1">
    <source>
        <dbReference type="HAMAP-Rule" id="MF_00328"/>
    </source>
</evidence>
<name>KGUA_ANADE</name>
<dbReference type="EC" id="2.7.4.8" evidence="1"/>
<dbReference type="EMBL" id="CP000251">
    <property type="protein sequence ID" value="ABC82376.1"/>
    <property type="molecule type" value="Genomic_DNA"/>
</dbReference>
<dbReference type="RefSeq" id="WP_011421658.1">
    <property type="nucleotide sequence ID" value="NC_007760.1"/>
</dbReference>
<dbReference type="SMR" id="Q2IL45"/>
<dbReference type="STRING" id="290397.Adeh_2606"/>
<dbReference type="KEGG" id="ade:Adeh_2606"/>
<dbReference type="eggNOG" id="COG0194">
    <property type="taxonomic scope" value="Bacteria"/>
</dbReference>
<dbReference type="HOGENOM" id="CLU_001715_1_2_7"/>
<dbReference type="OrthoDB" id="9808150at2"/>
<dbReference type="Proteomes" id="UP000001935">
    <property type="component" value="Chromosome"/>
</dbReference>
<dbReference type="GO" id="GO:0005829">
    <property type="term" value="C:cytosol"/>
    <property type="evidence" value="ECO:0007669"/>
    <property type="project" value="TreeGrafter"/>
</dbReference>
<dbReference type="GO" id="GO:0005524">
    <property type="term" value="F:ATP binding"/>
    <property type="evidence" value="ECO:0007669"/>
    <property type="project" value="UniProtKB-UniRule"/>
</dbReference>
<dbReference type="GO" id="GO:0004385">
    <property type="term" value="F:guanylate kinase activity"/>
    <property type="evidence" value="ECO:0007669"/>
    <property type="project" value="UniProtKB-UniRule"/>
</dbReference>
<dbReference type="CDD" id="cd00071">
    <property type="entry name" value="GMPK"/>
    <property type="match status" value="1"/>
</dbReference>
<dbReference type="FunFam" id="3.30.63.10:FF:000002">
    <property type="entry name" value="Guanylate kinase 1"/>
    <property type="match status" value="1"/>
</dbReference>
<dbReference type="Gene3D" id="3.30.63.10">
    <property type="entry name" value="Guanylate Kinase phosphate binding domain"/>
    <property type="match status" value="1"/>
</dbReference>
<dbReference type="Gene3D" id="3.40.50.300">
    <property type="entry name" value="P-loop containing nucleotide triphosphate hydrolases"/>
    <property type="match status" value="1"/>
</dbReference>
<dbReference type="HAMAP" id="MF_00328">
    <property type="entry name" value="Guanylate_kinase"/>
    <property type="match status" value="1"/>
</dbReference>
<dbReference type="InterPro" id="IPR008145">
    <property type="entry name" value="GK/Ca_channel_bsu"/>
</dbReference>
<dbReference type="InterPro" id="IPR008144">
    <property type="entry name" value="Guanylate_kin-like_dom"/>
</dbReference>
<dbReference type="InterPro" id="IPR017665">
    <property type="entry name" value="Guanylate_kinase"/>
</dbReference>
<dbReference type="InterPro" id="IPR020590">
    <property type="entry name" value="Guanylate_kinase_CS"/>
</dbReference>
<dbReference type="InterPro" id="IPR027417">
    <property type="entry name" value="P-loop_NTPase"/>
</dbReference>
<dbReference type="NCBIfam" id="TIGR03263">
    <property type="entry name" value="guanyl_kin"/>
    <property type="match status" value="1"/>
</dbReference>
<dbReference type="PANTHER" id="PTHR23117:SF13">
    <property type="entry name" value="GUANYLATE KINASE"/>
    <property type="match status" value="1"/>
</dbReference>
<dbReference type="PANTHER" id="PTHR23117">
    <property type="entry name" value="GUANYLATE KINASE-RELATED"/>
    <property type="match status" value="1"/>
</dbReference>
<dbReference type="Pfam" id="PF00625">
    <property type="entry name" value="Guanylate_kin"/>
    <property type="match status" value="1"/>
</dbReference>
<dbReference type="SMART" id="SM00072">
    <property type="entry name" value="GuKc"/>
    <property type="match status" value="1"/>
</dbReference>
<dbReference type="SUPFAM" id="SSF52540">
    <property type="entry name" value="P-loop containing nucleoside triphosphate hydrolases"/>
    <property type="match status" value="1"/>
</dbReference>
<dbReference type="PROSITE" id="PS00856">
    <property type="entry name" value="GUANYLATE_KINASE_1"/>
    <property type="match status" value="1"/>
</dbReference>
<dbReference type="PROSITE" id="PS50052">
    <property type="entry name" value="GUANYLATE_KINASE_2"/>
    <property type="match status" value="1"/>
</dbReference>
<protein>
    <recommendedName>
        <fullName evidence="1">Guanylate kinase</fullName>
        <ecNumber evidence="1">2.7.4.8</ecNumber>
    </recommendedName>
    <alternativeName>
        <fullName evidence="1">GMP kinase</fullName>
    </alternativeName>
</protein>
<feature type="chain" id="PRO_0000266284" description="Guanylate kinase">
    <location>
        <begin position="1"/>
        <end position="226"/>
    </location>
</feature>
<feature type="domain" description="Guanylate kinase-like" evidence="1">
    <location>
        <begin position="13"/>
        <end position="193"/>
    </location>
</feature>
<feature type="binding site" evidence="1">
    <location>
        <begin position="20"/>
        <end position="27"/>
    </location>
    <ligand>
        <name>ATP</name>
        <dbReference type="ChEBI" id="CHEBI:30616"/>
    </ligand>
</feature>
<proteinExistence type="inferred from homology"/>
<organism>
    <name type="scientific">Anaeromyxobacter dehalogenans (strain 2CP-C)</name>
    <dbReference type="NCBI Taxonomy" id="290397"/>
    <lineage>
        <taxon>Bacteria</taxon>
        <taxon>Pseudomonadati</taxon>
        <taxon>Myxococcota</taxon>
        <taxon>Myxococcia</taxon>
        <taxon>Myxococcales</taxon>
        <taxon>Cystobacterineae</taxon>
        <taxon>Anaeromyxobacteraceae</taxon>
        <taxon>Anaeromyxobacter</taxon>
    </lineage>
</organism>
<sequence length="226" mass="24357">MSSDAAAQERLPGLLLVLSAPSGAGKTTLAHRLREASPDAVFSISATTRAPRGAEREGVDYHFVTAERFTELVAQGAFAEWAEVHGQRYGTLRATVDEALAAGKLALFDIDVQGGAQIKAAWPQQAATVLVLPPDEAELERRLRGRDTDSDETIRRRLVAARAEVARGLGSYDYVVVNDVLEGALAQLQAIVRHERLRHAGRWDPEAARVAEACRRSAAPLGGWAS</sequence>
<keyword id="KW-0067">ATP-binding</keyword>
<keyword id="KW-0963">Cytoplasm</keyword>
<keyword id="KW-0418">Kinase</keyword>
<keyword id="KW-0547">Nucleotide-binding</keyword>
<keyword id="KW-1185">Reference proteome</keyword>
<keyword id="KW-0808">Transferase</keyword>
<reference key="1">
    <citation type="submission" date="2006-01" db="EMBL/GenBank/DDBJ databases">
        <title>Complete sequence of Anaeromyxobacter dehalogenans 2CP-C.</title>
        <authorList>
            <person name="Copeland A."/>
            <person name="Lucas S."/>
            <person name="Lapidus A."/>
            <person name="Barry K."/>
            <person name="Detter J.C."/>
            <person name="Glavina T."/>
            <person name="Hammon N."/>
            <person name="Israni S."/>
            <person name="Pitluck S."/>
            <person name="Brettin T."/>
            <person name="Bruce D."/>
            <person name="Han C."/>
            <person name="Tapia R."/>
            <person name="Gilna P."/>
            <person name="Kiss H."/>
            <person name="Schmutz J."/>
            <person name="Larimer F."/>
            <person name="Land M."/>
            <person name="Kyrpides N."/>
            <person name="Anderson I."/>
            <person name="Sanford R.A."/>
            <person name="Ritalahti K.M."/>
            <person name="Thomas H.S."/>
            <person name="Kirby J.R."/>
            <person name="Zhulin I.B."/>
            <person name="Loeffler F.E."/>
            <person name="Richardson P."/>
        </authorList>
    </citation>
    <scope>NUCLEOTIDE SEQUENCE [LARGE SCALE GENOMIC DNA]</scope>
    <source>
        <strain>2CP-C</strain>
    </source>
</reference>
<accession>Q2IL45</accession>
<gene>
    <name evidence="1" type="primary">gmk</name>
    <name type="ordered locus">Adeh_2606</name>
</gene>